<organism>
    <name type="scientific">Danio rerio</name>
    <name type="common">Zebrafish</name>
    <name type="synonym">Brachydanio rerio</name>
    <dbReference type="NCBI Taxonomy" id="7955"/>
    <lineage>
        <taxon>Eukaryota</taxon>
        <taxon>Metazoa</taxon>
        <taxon>Chordata</taxon>
        <taxon>Craniata</taxon>
        <taxon>Vertebrata</taxon>
        <taxon>Euteleostomi</taxon>
        <taxon>Actinopterygii</taxon>
        <taxon>Neopterygii</taxon>
        <taxon>Teleostei</taxon>
        <taxon>Ostariophysi</taxon>
        <taxon>Cypriniformes</taxon>
        <taxon>Danionidae</taxon>
        <taxon>Danioninae</taxon>
        <taxon>Danio</taxon>
    </lineage>
</organism>
<reference key="1">
    <citation type="journal article" date="2004" name="Development">
        <title>PlexinA4 is necessary as a downstream target of Islet2 to mediate Slit signaling for promotion of sensory axon branching.</title>
        <authorList>
            <person name="Miyashita T."/>
            <person name="Yeo S.-Y."/>
            <person name="Hirate Y."/>
            <person name="Segawa H."/>
            <person name="Wada H."/>
            <person name="Little M.H."/>
            <person name="Yamada T."/>
            <person name="Takahashi N."/>
            <person name="Okamoto H."/>
        </authorList>
    </citation>
    <scope>NUCLEOTIDE SEQUENCE [MRNA]</scope>
    <scope>FUNCTION</scope>
    <scope>DEVELOPMENTAL STAGE</scope>
    <source>
        <tissue>Embryo</tissue>
    </source>
</reference>
<reference key="2">
    <citation type="journal article" date="2013" name="Nature">
        <title>The zebrafish reference genome sequence and its relationship to the human genome.</title>
        <authorList>
            <person name="Howe K."/>
            <person name="Clark M.D."/>
            <person name="Torroja C.F."/>
            <person name="Torrance J."/>
            <person name="Berthelot C."/>
            <person name="Muffato M."/>
            <person name="Collins J.E."/>
            <person name="Humphray S."/>
            <person name="McLaren K."/>
            <person name="Matthews L."/>
            <person name="McLaren S."/>
            <person name="Sealy I."/>
            <person name="Caccamo M."/>
            <person name="Churcher C."/>
            <person name="Scott C."/>
            <person name="Barrett J.C."/>
            <person name="Koch R."/>
            <person name="Rauch G.J."/>
            <person name="White S."/>
            <person name="Chow W."/>
            <person name="Kilian B."/>
            <person name="Quintais L.T."/>
            <person name="Guerra-Assuncao J.A."/>
            <person name="Zhou Y."/>
            <person name="Gu Y."/>
            <person name="Yen J."/>
            <person name="Vogel J.H."/>
            <person name="Eyre T."/>
            <person name="Redmond S."/>
            <person name="Banerjee R."/>
            <person name="Chi J."/>
            <person name="Fu B."/>
            <person name="Langley E."/>
            <person name="Maguire S.F."/>
            <person name="Laird G.K."/>
            <person name="Lloyd D."/>
            <person name="Kenyon E."/>
            <person name="Donaldson S."/>
            <person name="Sehra H."/>
            <person name="Almeida-King J."/>
            <person name="Loveland J."/>
            <person name="Trevanion S."/>
            <person name="Jones M."/>
            <person name="Quail M."/>
            <person name="Willey D."/>
            <person name="Hunt A."/>
            <person name="Burton J."/>
            <person name="Sims S."/>
            <person name="McLay K."/>
            <person name="Plumb B."/>
            <person name="Davis J."/>
            <person name="Clee C."/>
            <person name="Oliver K."/>
            <person name="Clark R."/>
            <person name="Riddle C."/>
            <person name="Elliot D."/>
            <person name="Threadgold G."/>
            <person name="Harden G."/>
            <person name="Ware D."/>
            <person name="Begum S."/>
            <person name="Mortimore B."/>
            <person name="Kerry G."/>
            <person name="Heath P."/>
            <person name="Phillimore B."/>
            <person name="Tracey A."/>
            <person name="Corby N."/>
            <person name="Dunn M."/>
            <person name="Johnson C."/>
            <person name="Wood J."/>
            <person name="Clark S."/>
            <person name="Pelan S."/>
            <person name="Griffiths G."/>
            <person name="Smith M."/>
            <person name="Glithero R."/>
            <person name="Howden P."/>
            <person name="Barker N."/>
            <person name="Lloyd C."/>
            <person name="Stevens C."/>
            <person name="Harley J."/>
            <person name="Holt K."/>
            <person name="Panagiotidis G."/>
            <person name="Lovell J."/>
            <person name="Beasley H."/>
            <person name="Henderson C."/>
            <person name="Gordon D."/>
            <person name="Auger K."/>
            <person name="Wright D."/>
            <person name="Collins J."/>
            <person name="Raisen C."/>
            <person name="Dyer L."/>
            <person name="Leung K."/>
            <person name="Robertson L."/>
            <person name="Ambridge K."/>
            <person name="Leongamornlert D."/>
            <person name="McGuire S."/>
            <person name="Gilderthorp R."/>
            <person name="Griffiths C."/>
            <person name="Manthravadi D."/>
            <person name="Nichol S."/>
            <person name="Barker G."/>
            <person name="Whitehead S."/>
            <person name="Kay M."/>
            <person name="Brown J."/>
            <person name="Murnane C."/>
            <person name="Gray E."/>
            <person name="Humphries M."/>
            <person name="Sycamore N."/>
            <person name="Barker D."/>
            <person name="Saunders D."/>
            <person name="Wallis J."/>
            <person name="Babbage A."/>
            <person name="Hammond S."/>
            <person name="Mashreghi-Mohammadi M."/>
            <person name="Barr L."/>
            <person name="Martin S."/>
            <person name="Wray P."/>
            <person name="Ellington A."/>
            <person name="Matthews N."/>
            <person name="Ellwood M."/>
            <person name="Woodmansey R."/>
            <person name="Clark G."/>
            <person name="Cooper J."/>
            <person name="Tromans A."/>
            <person name="Grafham D."/>
            <person name="Skuce C."/>
            <person name="Pandian R."/>
            <person name="Andrews R."/>
            <person name="Harrison E."/>
            <person name="Kimberley A."/>
            <person name="Garnett J."/>
            <person name="Fosker N."/>
            <person name="Hall R."/>
            <person name="Garner P."/>
            <person name="Kelly D."/>
            <person name="Bird C."/>
            <person name="Palmer S."/>
            <person name="Gehring I."/>
            <person name="Berger A."/>
            <person name="Dooley C.M."/>
            <person name="Ersan-Urun Z."/>
            <person name="Eser C."/>
            <person name="Geiger H."/>
            <person name="Geisler M."/>
            <person name="Karotki L."/>
            <person name="Kirn A."/>
            <person name="Konantz J."/>
            <person name="Konantz M."/>
            <person name="Oberlander M."/>
            <person name="Rudolph-Geiger S."/>
            <person name="Teucke M."/>
            <person name="Lanz C."/>
            <person name="Raddatz G."/>
            <person name="Osoegawa K."/>
            <person name="Zhu B."/>
            <person name="Rapp A."/>
            <person name="Widaa S."/>
            <person name="Langford C."/>
            <person name="Yang F."/>
            <person name="Schuster S.C."/>
            <person name="Carter N.P."/>
            <person name="Harrow J."/>
            <person name="Ning Z."/>
            <person name="Herrero J."/>
            <person name="Searle S.M."/>
            <person name="Enright A."/>
            <person name="Geisler R."/>
            <person name="Plasterk R.H."/>
            <person name="Lee C."/>
            <person name="Westerfield M."/>
            <person name="de Jong P.J."/>
            <person name="Zon L.I."/>
            <person name="Postlethwait J.H."/>
            <person name="Nusslein-Volhard C."/>
            <person name="Hubbard T.J."/>
            <person name="Roest Crollius H."/>
            <person name="Rogers J."/>
            <person name="Stemple D.L."/>
        </authorList>
    </citation>
    <scope>NUCLEOTIDE SEQUENCE [LARGE SCALE GENOMIC DNA]</scope>
    <source>
        <strain>Tuebingen</strain>
    </source>
</reference>
<feature type="signal peptide" evidence="1">
    <location>
        <begin position="1"/>
        <end position="26"/>
    </location>
</feature>
<feature type="chain" id="PRO_0000240285" description="Plexin-A4">
    <location>
        <begin position="27"/>
        <end position="1903"/>
    </location>
</feature>
<feature type="topological domain" description="Extracellular" evidence="1">
    <location>
        <begin position="27"/>
        <end position="1246"/>
    </location>
</feature>
<feature type="transmembrane region" description="Helical" evidence="1">
    <location>
        <begin position="1247"/>
        <end position="1267"/>
    </location>
</feature>
<feature type="topological domain" description="Cytoplasmic" evidence="1">
    <location>
        <begin position="1268"/>
        <end position="1903"/>
    </location>
</feature>
<feature type="domain" description="Sema" evidence="2">
    <location>
        <begin position="27"/>
        <end position="515"/>
    </location>
</feature>
<feature type="domain" description="PSI 1">
    <location>
        <begin position="517"/>
        <end position="567"/>
    </location>
</feature>
<feature type="domain" description="PSI 2">
    <location>
        <begin position="663"/>
        <end position="710"/>
    </location>
</feature>
<feature type="domain" description="PSI 3">
    <location>
        <begin position="811"/>
        <end position="864"/>
    </location>
</feature>
<feature type="domain" description="IPT/TIG 1">
    <location>
        <begin position="866"/>
        <end position="960"/>
    </location>
</feature>
<feature type="domain" description="IPT/TIG 2">
    <location>
        <begin position="962"/>
        <end position="1046"/>
    </location>
</feature>
<feature type="domain" description="IPT/TIG 3">
    <location>
        <begin position="1049"/>
        <end position="1148"/>
    </location>
</feature>
<feature type="domain" description="IPT/TIG 4">
    <location>
        <begin position="1151"/>
        <end position="1246"/>
    </location>
</feature>
<feature type="glycosylation site" description="N-linked (GlcNAc...) asparagine" evidence="1">
    <location>
        <position position="166"/>
    </location>
</feature>
<feature type="glycosylation site" description="N-linked (GlcNAc...) asparagine" evidence="1">
    <location>
        <position position="450"/>
    </location>
</feature>
<feature type="glycosylation site" description="N-linked (GlcNAc...) asparagine" evidence="1">
    <location>
        <position position="575"/>
    </location>
</feature>
<feature type="glycosylation site" description="N-linked (GlcNAc...) asparagine" evidence="1">
    <location>
        <position position="600"/>
    </location>
</feature>
<feature type="glycosylation site" description="N-linked (GlcNAc...) asparagine" evidence="1">
    <location>
        <position position="656"/>
    </location>
</feature>
<feature type="glycosylation site" description="N-linked (GlcNAc...) asparagine" evidence="1">
    <location>
        <position position="663"/>
    </location>
</feature>
<feature type="glycosylation site" description="N-linked (GlcNAc...) asparagine" evidence="1">
    <location>
        <position position="764"/>
    </location>
</feature>
<feature type="glycosylation site" description="N-linked (GlcNAc...) asparagine" evidence="1">
    <location>
        <position position="772"/>
    </location>
</feature>
<feature type="glycosylation site" description="N-linked (GlcNAc...) asparagine" evidence="1">
    <location>
        <position position="981"/>
    </location>
</feature>
<feature type="glycosylation site" description="N-linked (GlcNAc...) asparagine" evidence="1">
    <location>
        <position position="992"/>
    </location>
</feature>
<feature type="glycosylation site" description="N-linked (GlcNAc...) asparagine" evidence="1">
    <location>
        <position position="1025"/>
    </location>
</feature>
<feature type="glycosylation site" description="N-linked (GlcNAc...) asparagine" evidence="1">
    <location>
        <position position="1141"/>
    </location>
</feature>
<feature type="glycosylation site" description="N-linked (GlcNAc...) asparagine" evidence="1">
    <location>
        <position position="1189"/>
    </location>
</feature>
<feature type="glycosylation site" description="N-linked (GlcNAc...) asparagine" evidence="1">
    <location>
        <position position="1214"/>
    </location>
</feature>
<feature type="disulfide bond" evidence="2">
    <location>
        <begin position="97"/>
        <end position="106"/>
    </location>
</feature>
<feature type="disulfide bond" evidence="2">
    <location>
        <begin position="132"/>
        <end position="140"/>
    </location>
</feature>
<feature type="disulfide bond" evidence="2">
    <location>
        <begin position="291"/>
        <end position="413"/>
    </location>
</feature>
<feature type="disulfide bond" evidence="2">
    <location>
        <begin position="307"/>
        <end position="364"/>
    </location>
</feature>
<feature type="disulfide bond" evidence="2">
    <location>
        <begin position="382"/>
        <end position="401"/>
    </location>
</feature>
<feature type="disulfide bond" evidence="2">
    <location>
        <begin position="518"/>
        <end position="535"/>
    </location>
</feature>
<feature type="disulfide bond" evidence="2">
    <location>
        <begin position="524"/>
        <end position="566"/>
    </location>
</feature>
<feature type="disulfide bond" evidence="2">
    <location>
        <begin position="527"/>
        <end position="544"/>
    </location>
</feature>
<feature type="disulfide bond" evidence="2">
    <location>
        <begin position="538"/>
        <end position="550"/>
    </location>
</feature>
<feature type="disulfide bond" evidence="2">
    <location>
        <begin position="601"/>
        <end position="620"/>
    </location>
</feature>
<feature type="sequence conflict" description="In Ref. 2; CAI21292/CAK10809." evidence="4" ref="2">
    <original>I</original>
    <variation>V</variation>
    <location>
        <position position="974"/>
    </location>
</feature>
<sequence>MAFHNRRWNFTFSCCVVVLLLPLVAARPQQPSAATRVHEEYSTFRVENTEWTFNHLAVDHRNGNVYLGAVNRIYKLSPGLDIQVSHQTGPDEDNRNCYPPRIVQPCSEPLTLTNNVNKMLLMDYRENRLLACGSLYQGICKLLRLDDLFKLGEPFHKKEHYLSGVNESGSVFGVIVSYGDASPDKLFVATAVDGRPEYFPTISSRKLTRNSEEDGMFAYVFHDEFVASMIKIPSDTFTVVPDFDIYYVYGFSSGNFVYFLTLQPEMGGGPTTGSSSAGREQVYTSKLVRLCKDDTAFNSYVEVPLGCVKGGVEYRLLQAAYLSKAGTILARSLGIGPDDDILYAVFSKGQKRRPKESSQESALCVFTLKEINERIKDRLQSCYKGEGTLDLAWLKVKDISCSSALLTIDDNFCGLDMNAPLGVSEMVRGIPLFSESKDKMTSVIAYVYKNHSLAFVGTRGGRLKKIRVDGPTYGALQYETIQVVDNGPILRDMAFSSDQHFLYVMSESQLTRVPVEACEQYSSCNECLGSGDPHCGWCVLHSMCTRKEKCERSSEPRRFASNIKQCVRLSVHPNNISVSQYSVMLVLEAHNVPELSAGVNCTFEDLAEMDGLVEGNRITCSSPAEKEVPRIIVDQGDHQIVQLYLKSKETGLAFANTSFVFYNCSVHKSCLSCVGSPYQCHWCKYRHTCTHDPSSCSFQEGRVKQPEECPQLLPADRILVPVNVVKPITLRAKNLPQPQSGQRGYECVLTIQGVEQRVPALRFNSSSVQCQNTSYMYDGMEMSSLPVDLTVIWNGDFSIDNPAQNKVHLYKCDARRESCGLCLKADPLFGCVWCKGENRCSLKQHCSYPQSMWLEHNGINSKCTHPRITKITPLRGPREGGTLVTIRGENLGLEFSEIKDHVKVADVECTPVPEGYIPAEQIVCEMGKAERSQFAGNVQVCVGECRPEFMAKSSKYYYFVIPQLLSLKPSRGPISGGTIVNITGGNLDAGSNVSIMFKDQKCTYQRRGGQWITCRSHASMQGYGNVSVSVYVDKAHIHKDLKFEYVEDPTITKLEPEWSIFSGNTPLTVSGTNLDIIHTPLIRAKYKNLETINICQVLSPTTMQCMAPELPYSISKHKDVPERPDEFGFILDNVQSVLALNNTNFVYYPNPVFEPLSVSGVQELKPGSPIILKGRNFLPPTPGGNGKLNYTVLIGDKPCALTVSDTQLLCESPNLTGRHKVLARVGGIEFSPGVVHITSDSPLSSTAVISIAGAGGLLIFFIVIVLIAYKRKSRESDLTLKRLQMQMDNLESRVALECKEAFAELQTDIHELTSDLDGAGIPFLDYRTYTMRVLFPGIEEHPVLRDLEVPGYRQEQVEKGLKLFGQLINNKVFLLSFIRTLESQRGFSMRDRGNVASLIMTVLQSKLEYATDVLKHLLSDLIDKNLESKNHPKLLLRRTESVAEKMLTNWFTFLLYKFLKECAGEPLFSLFCAIKQQMEKGPIDSITGEARYSLSEDKLIRQQIDYKTLVVNCMHPDNEKSPEVQVKVLNCDTVSQVKEKILDAIYKNVPYSHRPKASDMDLEWRQGRVVRVILQDEDVTTKIEADWKRLNMLSHYQVTDNAVVALVPKQVTAYNSVNNSTVSRTSASKYENMIKYTGSPDSLRSRTPMITPDLESGVKVWHLVKNHEHGDQKEGDRGSKMVSEIYLTRLLATKGTLQKFVDDLFETIFSTAHRGSALPLAIKYMFDFLDEQADKHNIHDPHVRHTWKSNCLPLRFWVNVIKNPQFVFDIHKSSITDACLSVVAQTFMDSCSTSEHRLGKDSPSNKLLYAKDIPSYKSWVERYYSDISKMPAISDQDMNAYLAEQSRMHMNEFNTMSSLSEIYSYIGKYTEEIVSALEQDDGARKQRLAYKLEQVVAFMSLES</sequence>
<protein>
    <recommendedName>
        <fullName>Plexin-A4</fullName>
    </recommendedName>
</protein>
<comment type="function">
    <text evidence="3">Involved in the development of primary sensory neurons especially in branching of the peripheral axons. Interacts with the SLIT2 signaling specifically to promote axonal branching of Rohon-Beard neurons and the trigeminal sensory ganglion neurons.</text>
</comment>
<comment type="subcellular location">
    <subcellularLocation>
        <location evidence="4">Cell membrane</location>
        <topology evidence="4">Single-pass type I membrane protein</topology>
    </subcellularLocation>
</comment>
<comment type="developmental stage">
    <text evidence="3">In the embryonic brain expressed in specific subtypes of neurons. Found in the tectal region, hindbrain, neurons in the nucleus of the anterior commissure, posterior commissure, postoptic commissure, medial lateral fascile and epiphysis. Localized to both central and peripheral axons of the primary sensory neurons.</text>
</comment>
<comment type="similarity">
    <text evidence="4">Belongs to the plexin family.</text>
</comment>
<keyword id="KW-1003">Cell membrane</keyword>
<keyword id="KW-0217">Developmental protein</keyword>
<keyword id="KW-1015">Disulfide bond</keyword>
<keyword id="KW-0325">Glycoprotein</keyword>
<keyword id="KW-0472">Membrane</keyword>
<keyword id="KW-0675">Receptor</keyword>
<keyword id="KW-1185">Reference proteome</keyword>
<keyword id="KW-0677">Repeat</keyword>
<keyword id="KW-0732">Signal</keyword>
<keyword id="KW-0812">Transmembrane</keyword>
<keyword id="KW-1133">Transmembrane helix</keyword>
<proteinExistence type="evidence at transcript level"/>
<accession>Q6BEA0</accession>
<accession>Q5RHC7</accession>
<name>PLXA4_DANRE</name>
<evidence type="ECO:0000255" key="1"/>
<evidence type="ECO:0000255" key="2">
    <source>
        <dbReference type="PROSITE-ProRule" id="PRU00352"/>
    </source>
</evidence>
<evidence type="ECO:0000269" key="3">
    <source>
    </source>
</evidence>
<evidence type="ECO:0000305" key="4"/>
<dbReference type="EMBL" id="AB103158">
    <property type="protein sequence ID" value="BAD35133.1"/>
    <property type="molecule type" value="mRNA"/>
</dbReference>
<dbReference type="EMBL" id="BX537358">
    <property type="protein sequence ID" value="CAI21292.1"/>
    <property type="molecule type" value="Genomic_DNA"/>
</dbReference>
<dbReference type="EMBL" id="BX649446">
    <property type="protein sequence ID" value="CAI21292.1"/>
    <property type="status" value="JOINED"/>
    <property type="molecule type" value="Genomic_DNA"/>
</dbReference>
<dbReference type="EMBL" id="BX649446">
    <property type="protein sequence ID" value="CAK10809.1"/>
    <property type="molecule type" value="Genomic_DNA"/>
</dbReference>
<dbReference type="EMBL" id="BX537358">
    <property type="protein sequence ID" value="CAK10809.1"/>
    <property type="status" value="JOINED"/>
    <property type="molecule type" value="Genomic_DNA"/>
</dbReference>
<dbReference type="RefSeq" id="NP_001004495.1">
    <property type="nucleotide sequence ID" value="NM_001004495.1"/>
</dbReference>
<dbReference type="SMR" id="Q6BEA0"/>
<dbReference type="FunCoup" id="Q6BEA0">
    <property type="interactions" value="658"/>
</dbReference>
<dbReference type="STRING" id="7955.ENSDARP00000021195"/>
<dbReference type="GlyCosmos" id="Q6BEA0">
    <property type="glycosylation" value="14 sites, No reported glycans"/>
</dbReference>
<dbReference type="PaxDb" id="7955-ENSDARP00000021195"/>
<dbReference type="GeneID" id="325938"/>
<dbReference type="KEGG" id="dre:325938"/>
<dbReference type="AGR" id="ZFIN:ZDB-GENE-030131-4663"/>
<dbReference type="CTD" id="91584"/>
<dbReference type="ZFIN" id="ZDB-GENE-030131-4663">
    <property type="gene designation" value="plxna4"/>
</dbReference>
<dbReference type="eggNOG" id="KOG3610">
    <property type="taxonomic scope" value="Eukaryota"/>
</dbReference>
<dbReference type="InParanoid" id="Q6BEA0"/>
<dbReference type="OrthoDB" id="125363at2759"/>
<dbReference type="PhylomeDB" id="Q6BEA0"/>
<dbReference type="TreeFam" id="TF312962"/>
<dbReference type="Reactome" id="R-DRE-399954">
    <property type="pathway name" value="Sema3A PAK dependent Axon repulsion"/>
</dbReference>
<dbReference type="Reactome" id="R-DRE-399956">
    <property type="pathway name" value="CRMPs in Sema3A signaling"/>
</dbReference>
<dbReference type="PRO" id="PR:Q6BEA0"/>
<dbReference type="Proteomes" id="UP000000437">
    <property type="component" value="Chromosome 4"/>
</dbReference>
<dbReference type="GO" id="GO:0016020">
    <property type="term" value="C:membrane"/>
    <property type="evidence" value="ECO:0000250"/>
    <property type="project" value="ZFIN"/>
</dbReference>
<dbReference type="GO" id="GO:0005886">
    <property type="term" value="C:plasma membrane"/>
    <property type="evidence" value="ECO:0000318"/>
    <property type="project" value="GO_Central"/>
</dbReference>
<dbReference type="GO" id="GO:0002116">
    <property type="term" value="C:semaphorin receptor complex"/>
    <property type="evidence" value="ECO:0000318"/>
    <property type="project" value="GO_Central"/>
</dbReference>
<dbReference type="GO" id="GO:0017154">
    <property type="term" value="F:semaphorin receptor activity"/>
    <property type="evidence" value="ECO:0000318"/>
    <property type="project" value="GO_Central"/>
</dbReference>
<dbReference type="GO" id="GO:0007411">
    <property type="term" value="P:axon guidance"/>
    <property type="evidence" value="ECO:0000316"/>
    <property type="project" value="ZFIN"/>
</dbReference>
<dbReference type="GO" id="GO:0007414">
    <property type="term" value="P:axonal defasciculation"/>
    <property type="evidence" value="ECO:0000316"/>
    <property type="project" value="ZFIN"/>
</dbReference>
<dbReference type="GO" id="GO:0001763">
    <property type="term" value="P:morphogenesis of a branching structure"/>
    <property type="evidence" value="ECO:0000315"/>
    <property type="project" value="ZFIN"/>
</dbReference>
<dbReference type="GO" id="GO:0030334">
    <property type="term" value="P:regulation of cell migration"/>
    <property type="evidence" value="ECO:0000318"/>
    <property type="project" value="GO_Central"/>
</dbReference>
<dbReference type="GO" id="GO:0071526">
    <property type="term" value="P:semaphorin-plexin signaling pathway"/>
    <property type="evidence" value="ECO:0000318"/>
    <property type="project" value="GO_Central"/>
</dbReference>
<dbReference type="GO" id="GO:0007416">
    <property type="term" value="P:synapse assembly"/>
    <property type="evidence" value="ECO:0000318"/>
    <property type="project" value="GO_Central"/>
</dbReference>
<dbReference type="CDD" id="cd00603">
    <property type="entry name" value="IPT_PCSR"/>
    <property type="match status" value="1"/>
</dbReference>
<dbReference type="CDD" id="cd01180">
    <property type="entry name" value="IPT_plexin_repeat1"/>
    <property type="match status" value="1"/>
</dbReference>
<dbReference type="CDD" id="cd01181">
    <property type="entry name" value="IPT_plexin_repeat3"/>
    <property type="match status" value="1"/>
</dbReference>
<dbReference type="CDD" id="cd12790">
    <property type="entry name" value="RasGAP_plexin_A"/>
    <property type="match status" value="1"/>
</dbReference>
<dbReference type="FunFam" id="1.10.506.10:FF:000005">
    <property type="entry name" value="Plexin A1"/>
    <property type="match status" value="1"/>
</dbReference>
<dbReference type="FunFam" id="1.10.506.10:FF:000006">
    <property type="entry name" value="Plexin A1"/>
    <property type="match status" value="1"/>
</dbReference>
<dbReference type="FunFam" id="2.60.40.10:FF:000123">
    <property type="entry name" value="Plexin A1"/>
    <property type="match status" value="1"/>
</dbReference>
<dbReference type="FunFam" id="2.130.10.10:FF:000006">
    <property type="entry name" value="Plexin A2"/>
    <property type="match status" value="1"/>
</dbReference>
<dbReference type="FunFam" id="2.60.40.10:FF:000071">
    <property type="entry name" value="Plexin A2"/>
    <property type="match status" value="1"/>
</dbReference>
<dbReference type="FunFam" id="2.60.40.10:FF:000339">
    <property type="entry name" value="Plexin A2"/>
    <property type="match status" value="1"/>
</dbReference>
<dbReference type="FunFam" id="3.10.20.90:FF:000018">
    <property type="entry name" value="Plexin A2"/>
    <property type="match status" value="1"/>
</dbReference>
<dbReference type="FunFam" id="2.60.40.10:FF:000329">
    <property type="entry name" value="Plexin A4"/>
    <property type="match status" value="1"/>
</dbReference>
<dbReference type="Gene3D" id="1.10.506.10">
    <property type="entry name" value="GTPase Activation - p120gap, domain 1"/>
    <property type="match status" value="1"/>
</dbReference>
<dbReference type="Gene3D" id="2.60.40.10">
    <property type="entry name" value="Immunoglobulins"/>
    <property type="match status" value="4"/>
</dbReference>
<dbReference type="Gene3D" id="3.10.20.90">
    <property type="entry name" value="Phosphatidylinositol 3-kinase Catalytic Subunit, Chain A, domain 1"/>
    <property type="match status" value="1"/>
</dbReference>
<dbReference type="Gene3D" id="2.130.10.10">
    <property type="entry name" value="YVTN repeat-like/Quinoprotein amine dehydrogenase"/>
    <property type="match status" value="1"/>
</dbReference>
<dbReference type="InterPro" id="IPR013783">
    <property type="entry name" value="Ig-like_fold"/>
</dbReference>
<dbReference type="InterPro" id="IPR014756">
    <property type="entry name" value="Ig_E-set"/>
</dbReference>
<dbReference type="InterPro" id="IPR002909">
    <property type="entry name" value="IPT_dom"/>
</dbReference>
<dbReference type="InterPro" id="IPR031148">
    <property type="entry name" value="Plexin"/>
</dbReference>
<dbReference type="InterPro" id="IPR013548">
    <property type="entry name" value="Plexin_cytoplasmic_RasGAP_dom"/>
</dbReference>
<dbReference type="InterPro" id="IPR046800">
    <property type="entry name" value="Plexin_RBD"/>
</dbReference>
<dbReference type="InterPro" id="IPR002165">
    <property type="entry name" value="Plexin_repeat"/>
</dbReference>
<dbReference type="InterPro" id="IPR016201">
    <property type="entry name" value="PSI"/>
</dbReference>
<dbReference type="InterPro" id="IPR008936">
    <property type="entry name" value="Rho_GTPase_activation_prot"/>
</dbReference>
<dbReference type="InterPro" id="IPR001627">
    <property type="entry name" value="Semap_dom"/>
</dbReference>
<dbReference type="InterPro" id="IPR036352">
    <property type="entry name" value="Semap_dom_sf"/>
</dbReference>
<dbReference type="InterPro" id="IPR041019">
    <property type="entry name" value="TIG1_plexin"/>
</dbReference>
<dbReference type="InterPro" id="IPR041362">
    <property type="entry name" value="TIG2_plexin"/>
</dbReference>
<dbReference type="InterPro" id="IPR015943">
    <property type="entry name" value="WD40/YVTN_repeat-like_dom_sf"/>
</dbReference>
<dbReference type="PANTHER" id="PTHR22625">
    <property type="entry name" value="PLEXIN"/>
    <property type="match status" value="1"/>
</dbReference>
<dbReference type="PANTHER" id="PTHR22625:SF34">
    <property type="entry name" value="PLEXIN-A4"/>
    <property type="match status" value="1"/>
</dbReference>
<dbReference type="Pfam" id="PF08337">
    <property type="entry name" value="Plexin_cytopl"/>
    <property type="match status" value="1"/>
</dbReference>
<dbReference type="Pfam" id="PF20170">
    <property type="entry name" value="Plexin_RBD"/>
    <property type="match status" value="1"/>
</dbReference>
<dbReference type="Pfam" id="PF01437">
    <property type="entry name" value="PSI"/>
    <property type="match status" value="2"/>
</dbReference>
<dbReference type="Pfam" id="PF24479">
    <property type="entry name" value="PSI_PlexinA-B"/>
    <property type="match status" value="1"/>
</dbReference>
<dbReference type="Pfam" id="PF01403">
    <property type="entry name" value="Sema"/>
    <property type="match status" value="1"/>
</dbReference>
<dbReference type="Pfam" id="PF01833">
    <property type="entry name" value="TIG"/>
    <property type="match status" value="4"/>
</dbReference>
<dbReference type="Pfam" id="PF18020">
    <property type="entry name" value="TIG_2"/>
    <property type="match status" value="1"/>
</dbReference>
<dbReference type="Pfam" id="PF17960">
    <property type="entry name" value="TIG_plexin"/>
    <property type="match status" value="1"/>
</dbReference>
<dbReference type="SMART" id="SM00429">
    <property type="entry name" value="IPT"/>
    <property type="match status" value="4"/>
</dbReference>
<dbReference type="SMART" id="SM00423">
    <property type="entry name" value="PSI"/>
    <property type="match status" value="3"/>
</dbReference>
<dbReference type="SMART" id="SM00630">
    <property type="entry name" value="Sema"/>
    <property type="match status" value="1"/>
</dbReference>
<dbReference type="SUPFAM" id="SSF81296">
    <property type="entry name" value="E set domains"/>
    <property type="match status" value="4"/>
</dbReference>
<dbReference type="SUPFAM" id="SSF48350">
    <property type="entry name" value="GTPase activation domain, GAP"/>
    <property type="match status" value="1"/>
</dbReference>
<dbReference type="SUPFAM" id="SSF103575">
    <property type="entry name" value="Plexin repeat"/>
    <property type="match status" value="1"/>
</dbReference>
<dbReference type="SUPFAM" id="SSF101912">
    <property type="entry name" value="Sema domain"/>
    <property type="match status" value="1"/>
</dbReference>
<dbReference type="PROSITE" id="PS51004">
    <property type="entry name" value="SEMA"/>
    <property type="match status" value="1"/>
</dbReference>
<gene>
    <name type="primary">plxna4</name>
</gene>